<accession>Q01378</accession>
<proteinExistence type="inferred from homology"/>
<evidence type="ECO:0000250" key="1"/>
<evidence type="ECO:0000255" key="2">
    <source>
        <dbReference type="PROSITE-ProRule" id="PRU10110"/>
    </source>
</evidence>
<evidence type="ECO:0000305" key="3"/>
<sequence>MSETLKTQPYSKRAEVHPSPVARRLFNLMETKKTNLCASVDLTTTKEILDLLEKVGPYICLVKTHIDIVSDFSYEGTIVPLLALAKKYNFMIFEDRKFADIGNTVKSQYKGGVYQIAKWSDITNAHGVTGSGIVTGLKQAAEEVTDEPRGLLMLAELSSKGAIAHGKYTEETVEIAKTDKDFVIGFIAQNQMGGSDEGFDWIIMTPGVGLDDKGDALGQQYRTVSEVMSTGTDIIIVGRGLFGKGRDPSVEGERYMKAGWNAYLARTNQL</sequence>
<comment type="catalytic activity">
    <reaction evidence="2">
        <text>orotidine 5'-phosphate + H(+) = UMP + CO2</text>
        <dbReference type="Rhea" id="RHEA:11596"/>
        <dbReference type="ChEBI" id="CHEBI:15378"/>
        <dbReference type="ChEBI" id="CHEBI:16526"/>
        <dbReference type="ChEBI" id="CHEBI:57538"/>
        <dbReference type="ChEBI" id="CHEBI:57865"/>
        <dbReference type="EC" id="4.1.1.23"/>
    </reaction>
</comment>
<comment type="pathway">
    <text>Pyrimidine metabolism; UMP biosynthesis via de novo pathway; UMP from orotate: step 2/2.</text>
</comment>
<comment type="similarity">
    <text evidence="3">Belongs to the OMP decarboxylase family.</text>
</comment>
<protein>
    <recommendedName>
        <fullName>Orotidine 5'-phosphate decarboxylase</fullName>
        <ecNumber>4.1.1.23</ecNumber>
    </recommendedName>
    <alternativeName>
        <fullName>OMP decarboxylase</fullName>
        <shortName>OMPDCase</shortName>
        <shortName>OMPdecase</shortName>
    </alternativeName>
    <alternativeName>
        <fullName>Uridine 5'-monophosphate synthase</fullName>
        <shortName>UMP synthase</shortName>
    </alternativeName>
</protein>
<reference key="1">
    <citation type="journal article" date="1992" name="J. Ferment. Bioeng.">
        <title>The orotidine-5'-phosphate decarboxylase gene (URA3) of a methylotrophic yeast, Candida boidinii: nucleotide sequence and its expression in Escherichia coli.</title>
        <authorList>
            <person name="Sakai Y."/>
            <person name="Kazarimoto T."/>
            <person name="Tani Y."/>
        </authorList>
    </citation>
    <scope>NUCLEOTIDE SEQUENCE [GENOMIC DNA]</scope>
</reference>
<name>PYRF_CANBO</name>
<keyword id="KW-0210">Decarboxylase</keyword>
<keyword id="KW-0456">Lyase</keyword>
<keyword id="KW-0665">Pyrimidine biosynthesis</keyword>
<gene>
    <name type="primary">URA3</name>
</gene>
<organism>
    <name type="scientific">Candida boidinii</name>
    <name type="common">Yeast</name>
    <dbReference type="NCBI Taxonomy" id="5477"/>
    <lineage>
        <taxon>Eukaryota</taxon>
        <taxon>Fungi</taxon>
        <taxon>Dikarya</taxon>
        <taxon>Ascomycota</taxon>
        <taxon>Saccharomycotina</taxon>
        <taxon>Pichiomycetes</taxon>
        <taxon>Pichiales</taxon>
        <taxon>Pichiaceae</taxon>
        <taxon>Ogataea</taxon>
        <taxon>Ogataea/Candida clade</taxon>
    </lineage>
</organism>
<dbReference type="EC" id="4.1.1.23"/>
<dbReference type="EMBL" id="M86236">
    <property type="protein sequence ID" value="AAA34376.1"/>
    <property type="molecule type" value="Genomic_DNA"/>
</dbReference>
<dbReference type="SMR" id="Q01378"/>
<dbReference type="UniPathway" id="UPA00070">
    <property type="reaction ID" value="UER00120"/>
</dbReference>
<dbReference type="GO" id="GO:0004588">
    <property type="term" value="F:orotate phosphoribosyltransferase activity"/>
    <property type="evidence" value="ECO:0007669"/>
    <property type="project" value="TreeGrafter"/>
</dbReference>
<dbReference type="GO" id="GO:0004590">
    <property type="term" value="F:orotidine-5'-phosphate decarboxylase activity"/>
    <property type="evidence" value="ECO:0007669"/>
    <property type="project" value="UniProtKB-EC"/>
</dbReference>
<dbReference type="GO" id="GO:0006207">
    <property type="term" value="P:'de novo' pyrimidine nucleobase biosynthetic process"/>
    <property type="evidence" value="ECO:0007669"/>
    <property type="project" value="InterPro"/>
</dbReference>
<dbReference type="GO" id="GO:0044205">
    <property type="term" value="P:'de novo' UMP biosynthetic process"/>
    <property type="evidence" value="ECO:0007669"/>
    <property type="project" value="UniProtKB-UniPathway"/>
</dbReference>
<dbReference type="CDD" id="cd04725">
    <property type="entry name" value="OMP_decarboxylase_like"/>
    <property type="match status" value="1"/>
</dbReference>
<dbReference type="FunFam" id="3.20.20.70:FF:000114">
    <property type="entry name" value="Decarboxylase,orotidine phosphate"/>
    <property type="match status" value="1"/>
</dbReference>
<dbReference type="Gene3D" id="3.20.20.70">
    <property type="entry name" value="Aldolase class I"/>
    <property type="match status" value="1"/>
</dbReference>
<dbReference type="InterPro" id="IPR013785">
    <property type="entry name" value="Aldolase_TIM"/>
</dbReference>
<dbReference type="InterPro" id="IPR014732">
    <property type="entry name" value="OMPdecase"/>
</dbReference>
<dbReference type="InterPro" id="IPR018089">
    <property type="entry name" value="OMPdecase_AS"/>
</dbReference>
<dbReference type="InterPro" id="IPR001754">
    <property type="entry name" value="OMPdeCOase_dom"/>
</dbReference>
<dbReference type="InterPro" id="IPR011060">
    <property type="entry name" value="RibuloseP-bd_barrel"/>
</dbReference>
<dbReference type="NCBIfam" id="TIGR01740">
    <property type="entry name" value="pyrF"/>
    <property type="match status" value="1"/>
</dbReference>
<dbReference type="PANTHER" id="PTHR19278">
    <property type="entry name" value="OROTATE PHOSPHORIBOSYLTRANSFERASE"/>
    <property type="match status" value="1"/>
</dbReference>
<dbReference type="PANTHER" id="PTHR19278:SF9">
    <property type="entry name" value="URIDINE 5'-MONOPHOSPHATE SYNTHASE"/>
    <property type="match status" value="1"/>
</dbReference>
<dbReference type="Pfam" id="PF00215">
    <property type="entry name" value="OMPdecase"/>
    <property type="match status" value="1"/>
</dbReference>
<dbReference type="SMART" id="SM00934">
    <property type="entry name" value="OMPdecase"/>
    <property type="match status" value="1"/>
</dbReference>
<dbReference type="SUPFAM" id="SSF51366">
    <property type="entry name" value="Ribulose-phoshate binding barrel"/>
    <property type="match status" value="1"/>
</dbReference>
<dbReference type="PROSITE" id="PS00156">
    <property type="entry name" value="OMPDECASE"/>
    <property type="match status" value="1"/>
</dbReference>
<feature type="chain" id="PRO_0000134647" description="Orotidine 5'-phosphate decarboxylase">
    <location>
        <begin position="1"/>
        <end position="270"/>
    </location>
</feature>
<feature type="active site" description="Proton donor" evidence="2">
    <location>
        <position position="97"/>
    </location>
</feature>
<feature type="binding site" evidence="1">
    <location>
        <position position="41"/>
    </location>
    <ligand>
        <name>substrate</name>
    </ligand>
</feature>
<feature type="binding site" evidence="1">
    <location>
        <begin position="63"/>
        <end position="65"/>
    </location>
    <ligand>
        <name>substrate</name>
    </ligand>
</feature>
<feature type="binding site" evidence="1">
    <location>
        <begin position="95"/>
        <end position="104"/>
    </location>
    <ligand>
        <name>substrate</name>
    </ligand>
</feature>
<feature type="binding site" evidence="1">
    <location>
        <position position="221"/>
    </location>
    <ligand>
        <name>substrate</name>
    </ligand>
</feature>
<feature type="binding site" evidence="1">
    <location>
        <position position="239"/>
    </location>
    <ligand>
        <name>substrate</name>
    </ligand>
</feature>